<proteinExistence type="inferred from homology"/>
<comment type="function">
    <text evidence="1 4">Catalyzes the reversible phosphorylation of S-methyl-5'-thioadenosine (MTA) to adenine and 5-methylthioribose-1-phosphate. Involved in the breakdown of MTA, a major by-product of polyamine biosynthesis. Responsible for the first step in the methionine salvage pathway after MTA has been generated from S-adenosylmethionine. Has broad substrate specificity with 6-aminopurine nucleosides as preferred substrates (By similarity). Can also use adenosine as substrate to form ribose 1-phosphate (Probable).</text>
</comment>
<comment type="catalytic activity">
    <reaction evidence="1">
        <text>S-methyl-5'-thioadenosine + phosphate = 5-(methylsulfanyl)-alpha-D-ribose 1-phosphate + adenine</text>
        <dbReference type="Rhea" id="RHEA:11852"/>
        <dbReference type="ChEBI" id="CHEBI:16708"/>
        <dbReference type="ChEBI" id="CHEBI:17509"/>
        <dbReference type="ChEBI" id="CHEBI:43474"/>
        <dbReference type="ChEBI" id="CHEBI:58533"/>
        <dbReference type="EC" id="2.4.2.28"/>
    </reaction>
</comment>
<comment type="catalytic activity">
    <reaction evidence="4">
        <text>adenosine + phosphate = alpha-D-ribose 1-phosphate + adenine</text>
        <dbReference type="Rhea" id="RHEA:27642"/>
        <dbReference type="ChEBI" id="CHEBI:16335"/>
        <dbReference type="ChEBI" id="CHEBI:16708"/>
        <dbReference type="ChEBI" id="CHEBI:43474"/>
        <dbReference type="ChEBI" id="CHEBI:57720"/>
    </reaction>
</comment>
<comment type="pathway">
    <text evidence="1">Amino-acid biosynthesis; L-methionine biosynthesis via salvage pathway; S-methyl-5-thio-alpha-D-ribose 1-phosphate from S-methyl-5'-thioadenosine (phosphorylase route): step 1/1.</text>
</comment>
<comment type="subunit">
    <text evidence="1">Homohexamer. Dimer of a homotrimer.</text>
</comment>
<comment type="disruption phenotype">
    <text evidence="2">Disruption of the gene results in a large decrease in ribose 1,5-bisphosphate generation from adenosine.</text>
</comment>
<comment type="similarity">
    <text evidence="1">Belongs to the PNP/MTAP phosphorylase family. MTAP subfamily.</text>
</comment>
<evidence type="ECO:0000255" key="1">
    <source>
        <dbReference type="HAMAP-Rule" id="MF_01963"/>
    </source>
</evidence>
<evidence type="ECO:0000269" key="2">
    <source>
    </source>
</evidence>
<evidence type="ECO:0000303" key="3">
    <source>
    </source>
</evidence>
<evidence type="ECO:0000305" key="4">
    <source>
    </source>
</evidence>
<organism>
    <name type="scientific">Thermococcus kodakarensis (strain ATCC BAA-918 / JCM 12380 / KOD1)</name>
    <name type="common">Pyrococcus kodakaraensis (strain KOD1)</name>
    <dbReference type="NCBI Taxonomy" id="69014"/>
    <lineage>
        <taxon>Archaea</taxon>
        <taxon>Methanobacteriati</taxon>
        <taxon>Methanobacteriota</taxon>
        <taxon>Thermococci</taxon>
        <taxon>Thermococcales</taxon>
        <taxon>Thermococcaceae</taxon>
        <taxon>Thermococcus</taxon>
    </lineage>
</organism>
<reference key="1">
    <citation type="journal article" date="2005" name="Genome Res.">
        <title>Complete genome sequence of the hyperthermophilic archaeon Thermococcus kodakaraensis KOD1 and comparison with Pyrococcus genomes.</title>
        <authorList>
            <person name="Fukui T."/>
            <person name="Atomi H."/>
            <person name="Kanai T."/>
            <person name="Matsumi R."/>
            <person name="Fujiwara S."/>
            <person name="Imanaka T."/>
        </authorList>
    </citation>
    <scope>NUCLEOTIDE SEQUENCE [LARGE SCALE GENOMIC DNA]</scope>
    <source>
        <strain>ATCC BAA-918 / JCM 12380 / KOD1</strain>
    </source>
</reference>
<reference key="2">
    <citation type="journal article" date="2015" name="Nat. Chem. Biol.">
        <title>A pentose bisphosphate pathway for nucleoside degradation in Archaea.</title>
        <authorList>
            <person name="Aono R."/>
            <person name="Sato T."/>
            <person name="Imanaka T."/>
            <person name="Atomi H."/>
        </authorList>
    </citation>
    <scope>FUNCTION</scope>
    <scope>DISRUPTION PHENOTYPE</scope>
    <source>
        <strain>ATCC BAA-918 / JCM 12380 / KOD1</strain>
    </source>
</reference>
<sequence length="257" mass="29076">MPRIGIIGGSGVYGVFEPKETVKVHTPYGRPSAPVEIGEIEGVEVAFIPRHGKHHEFPPHEVPYRANIWALKELGVERVIGITAVGSLREEYKPGDIVITDQFIDFTKKRDYTFYNGPRVAHVSMADPFCPEMRKIFYETAKELGFPVHEKGTYVCIEGPRFSTRAESFMFRQFAHIIGMTLVPEVNLARELGMCYVNIATVTDYDVWADKPVDAQEVLKVMAENNYKVQELLKKGIPKIPEERHCGCADVLKTMFV</sequence>
<feature type="chain" id="PRO_0000415108" description="S-methyl-5'-thioadenosine phosphorylase">
    <location>
        <begin position="1"/>
        <end position="257"/>
    </location>
</feature>
<feature type="binding site" evidence="1">
    <location>
        <position position="10"/>
    </location>
    <ligand>
        <name>phosphate</name>
        <dbReference type="ChEBI" id="CHEBI:43474"/>
    </ligand>
</feature>
<feature type="binding site" evidence="1">
    <location>
        <begin position="50"/>
        <end position="51"/>
    </location>
    <ligand>
        <name>phosphate</name>
        <dbReference type="ChEBI" id="CHEBI:43474"/>
    </ligand>
</feature>
<feature type="binding site" evidence="1">
    <location>
        <begin position="83"/>
        <end position="84"/>
    </location>
    <ligand>
        <name>phosphate</name>
        <dbReference type="ChEBI" id="CHEBI:43474"/>
    </ligand>
</feature>
<feature type="binding site" evidence="1">
    <location>
        <position position="180"/>
    </location>
    <ligand>
        <name>substrate</name>
    </ligand>
</feature>
<feature type="binding site" evidence="1">
    <location>
        <position position="181"/>
    </location>
    <ligand>
        <name>phosphate</name>
        <dbReference type="ChEBI" id="CHEBI:43474"/>
    </ligand>
</feature>
<feature type="binding site" evidence="1">
    <location>
        <begin position="204"/>
        <end position="206"/>
    </location>
    <ligand>
        <name>substrate</name>
    </ligand>
</feature>
<feature type="site" description="Important for substrate specificity" evidence="1">
    <location>
        <position position="163"/>
    </location>
</feature>
<feature type="site" description="Important for substrate specificity" evidence="1">
    <location>
        <position position="215"/>
    </location>
</feature>
<protein>
    <recommendedName>
        <fullName evidence="1">S-methyl-5'-thioadenosine phosphorylase</fullName>
        <ecNumber evidence="1">2.4.2.28</ecNumber>
    </recommendedName>
    <alternativeName>
        <fullName evidence="1">5'-methylthioadenosine phosphorylase</fullName>
        <shortName evidence="1">MTA phosphorylase</shortName>
        <shortName evidence="1">MTAP</shortName>
    </alternativeName>
    <alternativeName>
        <fullName evidence="3">Nucleoside phosphorylase</fullName>
    </alternativeName>
</protein>
<name>MTAP_THEKO</name>
<accession>Q5JEQ6</accession>
<gene>
    <name evidence="1" type="primary">mtnP</name>
    <name type="ordered locus">TK1895</name>
</gene>
<keyword id="KW-0328">Glycosyltransferase</keyword>
<keyword id="KW-0660">Purine salvage</keyword>
<keyword id="KW-1185">Reference proteome</keyword>
<keyword id="KW-0808">Transferase</keyword>
<dbReference type="EC" id="2.4.2.28" evidence="1"/>
<dbReference type="EMBL" id="AP006878">
    <property type="protein sequence ID" value="BAD86084.1"/>
    <property type="molecule type" value="Genomic_DNA"/>
</dbReference>
<dbReference type="RefSeq" id="WP_011250846.1">
    <property type="nucleotide sequence ID" value="NC_006624.1"/>
</dbReference>
<dbReference type="SMR" id="Q5JEQ6"/>
<dbReference type="IntAct" id="Q5JEQ6">
    <property type="interactions" value="1"/>
</dbReference>
<dbReference type="MINT" id="Q5JEQ6"/>
<dbReference type="STRING" id="69014.TK1895"/>
<dbReference type="EnsemblBacteria" id="BAD86084">
    <property type="protein sequence ID" value="BAD86084"/>
    <property type="gene ID" value="TK1895"/>
</dbReference>
<dbReference type="GeneID" id="78448426"/>
<dbReference type="KEGG" id="tko:TK1895"/>
<dbReference type="PATRIC" id="fig|69014.16.peg.1853"/>
<dbReference type="eggNOG" id="arCOG01327">
    <property type="taxonomic scope" value="Archaea"/>
</dbReference>
<dbReference type="HOGENOM" id="CLU_054456_0_2_2"/>
<dbReference type="InParanoid" id="Q5JEQ6"/>
<dbReference type="OrthoDB" id="7681at2157"/>
<dbReference type="PhylomeDB" id="Q5JEQ6"/>
<dbReference type="BioCyc" id="MetaCyc:MONOMER-19657"/>
<dbReference type="UniPathway" id="UPA00904">
    <property type="reaction ID" value="UER00873"/>
</dbReference>
<dbReference type="Proteomes" id="UP000000536">
    <property type="component" value="Chromosome"/>
</dbReference>
<dbReference type="GO" id="GO:0005829">
    <property type="term" value="C:cytosol"/>
    <property type="evidence" value="ECO:0000318"/>
    <property type="project" value="GO_Central"/>
</dbReference>
<dbReference type="GO" id="GO:0017061">
    <property type="term" value="F:S-methyl-5-thioadenosine phosphorylase activity"/>
    <property type="evidence" value="ECO:0000318"/>
    <property type="project" value="GO_Central"/>
</dbReference>
<dbReference type="GO" id="GO:0019509">
    <property type="term" value="P:L-methionine salvage from methylthioadenosine"/>
    <property type="evidence" value="ECO:0000318"/>
    <property type="project" value="GO_Central"/>
</dbReference>
<dbReference type="GO" id="GO:0006166">
    <property type="term" value="P:purine ribonucleoside salvage"/>
    <property type="evidence" value="ECO:0007669"/>
    <property type="project" value="UniProtKB-KW"/>
</dbReference>
<dbReference type="CDD" id="cd09010">
    <property type="entry name" value="MTAP_SsMTAPII_like_MTIP"/>
    <property type="match status" value="1"/>
</dbReference>
<dbReference type="FunFam" id="3.40.50.1580:FF:000012">
    <property type="entry name" value="Probable 6-oxopurine nucleoside phosphorylase"/>
    <property type="match status" value="1"/>
</dbReference>
<dbReference type="Gene3D" id="3.40.50.1580">
    <property type="entry name" value="Nucleoside phosphorylase domain"/>
    <property type="match status" value="1"/>
</dbReference>
<dbReference type="HAMAP" id="MF_01963">
    <property type="entry name" value="MTAP"/>
    <property type="match status" value="1"/>
</dbReference>
<dbReference type="InterPro" id="IPR010044">
    <property type="entry name" value="MTAP"/>
</dbReference>
<dbReference type="InterPro" id="IPR000845">
    <property type="entry name" value="Nucleoside_phosphorylase_d"/>
</dbReference>
<dbReference type="InterPro" id="IPR035994">
    <property type="entry name" value="Nucleoside_phosphorylase_sf"/>
</dbReference>
<dbReference type="InterPro" id="IPR018099">
    <property type="entry name" value="Purine_phosphorylase-2_CS"/>
</dbReference>
<dbReference type="NCBIfam" id="TIGR01694">
    <property type="entry name" value="MTAP"/>
    <property type="match status" value="1"/>
</dbReference>
<dbReference type="NCBIfam" id="NF006334">
    <property type="entry name" value="PRK08564.1"/>
    <property type="match status" value="1"/>
</dbReference>
<dbReference type="PANTHER" id="PTHR42679">
    <property type="entry name" value="S-METHYL-5'-THIOADENOSINE PHOSPHORYLASE"/>
    <property type="match status" value="1"/>
</dbReference>
<dbReference type="PANTHER" id="PTHR42679:SF3">
    <property type="entry name" value="S-METHYL-5'-THIOADENOSINE PHOSPHORYLASE"/>
    <property type="match status" value="1"/>
</dbReference>
<dbReference type="Pfam" id="PF01048">
    <property type="entry name" value="PNP_UDP_1"/>
    <property type="match status" value="1"/>
</dbReference>
<dbReference type="SUPFAM" id="SSF53167">
    <property type="entry name" value="Purine and uridine phosphorylases"/>
    <property type="match status" value="1"/>
</dbReference>
<dbReference type="PROSITE" id="PS01240">
    <property type="entry name" value="PNP_MTAP_2"/>
    <property type="match status" value="1"/>
</dbReference>